<evidence type="ECO:0000250" key="1">
    <source>
        <dbReference type="UniProtKB" id="A0AAQ4VMX2"/>
    </source>
</evidence>
<evidence type="ECO:0000250" key="2">
    <source>
        <dbReference type="UniProtKB" id="P0C0L4"/>
    </source>
</evidence>
<evidence type="ECO:0000250" key="3">
    <source>
        <dbReference type="UniProtKB" id="P0C0L5"/>
    </source>
</evidence>
<evidence type="ECO:0000255" key="4"/>
<evidence type="ECO:0000255" key="5">
    <source>
        <dbReference type="PROSITE-ProRule" id="PRU00022"/>
    </source>
</evidence>
<evidence type="ECO:0000255" key="6">
    <source>
        <dbReference type="PROSITE-ProRule" id="PRU00295"/>
    </source>
</evidence>
<evidence type="ECO:0000269" key="7">
    <source>
    </source>
</evidence>
<evidence type="ECO:0000305" key="8"/>
<evidence type="ECO:0000312" key="9">
    <source>
        <dbReference type="MGI" id="MGI:88228"/>
    </source>
</evidence>
<feature type="signal peptide">
    <location>
        <begin position="1"/>
        <end position="19"/>
    </location>
</feature>
<feature type="chain" id="PRO_0000462546" description="Complement C4-B">
    <location>
        <begin position="20"/>
        <end position="1738"/>
    </location>
</feature>
<feature type="chain" id="PRO_0000005973" description="Complement C4 beta chain">
    <location>
        <begin position="20"/>
        <end position="673"/>
    </location>
</feature>
<feature type="propeptide" id="PRO_0000005974">
    <location>
        <begin position="674"/>
        <end position="677"/>
    </location>
</feature>
<feature type="chain" id="PRO_0000005975" description="Complement C4 alpha chain">
    <location>
        <begin position="678"/>
        <end position="1443"/>
    </location>
</feature>
<feature type="chain" id="PRO_0000005976" description="C4a anaphylatoxin">
    <location>
        <begin position="678"/>
        <end position="753"/>
    </location>
</feature>
<feature type="chain" id="PRO_0000462547" description="Complement C4b-B">
    <location>
        <begin position="754"/>
        <end position="1443"/>
    </location>
</feature>
<feature type="propeptide" id="PRO_0000005977">
    <location>
        <begin position="1444"/>
        <end position="1447"/>
    </location>
</feature>
<feature type="chain" id="PRO_0000005978" description="Complement C4 gamma chain">
    <location>
        <begin position="1448"/>
        <end position="1738"/>
    </location>
</feature>
<feature type="domain" description="Anaphylatoxin-like" evidence="5">
    <location>
        <begin position="700"/>
        <end position="734"/>
    </location>
</feature>
<feature type="domain" description="NTR" evidence="6">
    <location>
        <begin position="1589"/>
        <end position="1736"/>
    </location>
</feature>
<feature type="site" description="Cleavage; by C1S, MASP2 and GZMK" evidence="2">
    <location>
        <begin position="753"/>
        <end position="754"/>
    </location>
</feature>
<feature type="modified residue" description="Sulfotyrosine" evidence="3">
    <location>
        <position position="1413"/>
    </location>
</feature>
<feature type="modified residue" description="Sulfotyrosine" evidence="3">
    <location>
        <position position="1416"/>
    </location>
</feature>
<feature type="modified residue" description="Sulfotyrosine" evidence="3">
    <location>
        <position position="1417"/>
    </location>
</feature>
<feature type="glycosylation site" description="N-linked (GlcNAc...) asparagine" evidence="4">
    <location>
        <position position="224"/>
    </location>
</feature>
<feature type="glycosylation site" description="N-linked (GlcNAc...) asparagine" evidence="4">
    <location>
        <position position="743"/>
    </location>
</feature>
<feature type="glycosylation site" description="N-linked (GlcNAc...) asparagine" evidence="7">
    <location>
        <position position="1324"/>
    </location>
</feature>
<feature type="glycosylation site" description="N-linked (GlcNAc...) asparagine" evidence="4">
    <location>
        <position position="1387"/>
    </location>
</feature>
<feature type="disulfide bond" evidence="2">
    <location>
        <begin position="66"/>
        <end position="95"/>
    </location>
</feature>
<feature type="disulfide bond" description="Interchain (with C-818)" evidence="2">
    <location>
        <position position="565"/>
    </location>
</feature>
<feature type="disulfide bond" evidence="2">
    <location>
        <begin position="633"/>
        <end position="667"/>
    </location>
</feature>
<feature type="disulfide bond" evidence="2">
    <location>
        <begin position="700"/>
        <end position="726"/>
    </location>
</feature>
<feature type="disulfide bond" evidence="2">
    <location>
        <begin position="701"/>
        <end position="733"/>
    </location>
</feature>
<feature type="disulfide bond" evidence="2">
    <location>
        <begin position="714"/>
        <end position="734"/>
    </location>
</feature>
<feature type="disulfide bond" description="Interchain (with C-565)" evidence="2">
    <location>
        <position position="818"/>
    </location>
</feature>
<feature type="disulfide bond" description="Interchain (with C-1584)" evidence="2">
    <location>
        <position position="874"/>
    </location>
</feature>
<feature type="disulfide bond" description="Interchain (with C-1560)" evidence="2">
    <location>
        <position position="1390"/>
    </location>
</feature>
<feature type="disulfide bond" evidence="2">
    <location>
        <begin position="1465"/>
        <end position="1529"/>
    </location>
</feature>
<feature type="disulfide bond" description="Interchain (with C-1390)" evidence="2">
    <location>
        <position position="1560"/>
    </location>
</feature>
<feature type="disulfide bond" evidence="2">
    <location>
        <begin position="1577"/>
        <end position="1582"/>
    </location>
</feature>
<feature type="disulfide bond" description="Interchain (with C-874)" evidence="2">
    <location>
        <position position="1584"/>
    </location>
</feature>
<feature type="disulfide bond" evidence="2">
    <location>
        <begin position="1589"/>
        <end position="1667"/>
    </location>
</feature>
<feature type="disulfide bond" evidence="2">
    <location>
        <begin position="1612"/>
        <end position="1736"/>
    </location>
</feature>
<feature type="disulfide bond" evidence="2">
    <location>
        <begin position="1712"/>
        <end position="1721"/>
    </location>
</feature>
<feature type="cross-link" description="Isoglutamyl cysteine thioester (Cys-Gln)" evidence="2">
    <location>
        <begin position="1006"/>
        <end position="1009"/>
    </location>
</feature>
<feature type="sequence conflict" description="In Ref. 1; AAA39557." evidence="8" ref="1">
    <original>F</original>
    <variation>Y</variation>
    <location>
        <position position="132"/>
    </location>
</feature>
<feature type="sequence conflict" description="In Ref. 4; BAE34429." evidence="8" ref="4">
    <original>E</original>
    <variation>G</variation>
    <location>
        <position position="177"/>
    </location>
</feature>
<feature type="sequence conflict" description="In Ref. 4; BAE34429." evidence="8" ref="4">
    <original>A</original>
    <variation>V</variation>
    <location>
        <position position="283"/>
    </location>
</feature>
<feature type="sequence conflict" description="In Ref. 1; AAA39557." evidence="8" ref="1">
    <original>G</original>
    <variation>E</variation>
    <location>
        <position position="327"/>
    </location>
</feature>
<feature type="sequence conflict" description="In Ref. 7; AAH67394/AAH67409." evidence="8" ref="7">
    <original>E</original>
    <variation>K</variation>
    <location>
        <position position="440"/>
    </location>
</feature>
<feature type="sequence conflict" description="In Ref. 1; AAA39557 and 4; BAE34280." evidence="8" ref="1 4">
    <original>Q</original>
    <variation>E</variation>
    <location>
        <position position="570"/>
    </location>
</feature>
<feature type="sequence conflict" description="In Ref. 1; AAA39557, 2; AAA39506, 3; AAA39561, 4; BAE34280/BAE34429 and 7; AAH67394/AAH67409." evidence="8" ref="1 2 3 4 7">
    <original>M</original>
    <variation>T</variation>
    <location>
        <position position="604"/>
    </location>
</feature>
<feature type="sequence conflict" description="In Ref. 4; BAE34429." evidence="8" ref="4">
    <original>D</original>
    <variation>G</variation>
    <location>
        <position position="639"/>
    </location>
</feature>
<feature type="sequence conflict" description="In Ref. 4; BAE34280." evidence="8" ref="4">
    <original>M</original>
    <variation>I</variation>
    <location>
        <position position="758"/>
    </location>
</feature>
<feature type="sequence conflict" description="In Ref. 1; AAA39557." evidence="8" ref="1">
    <original>P</original>
    <variation>R</variation>
    <location>
        <position position="838"/>
    </location>
</feature>
<feature type="sequence conflict" description="In Ref. 4; BAE34280." evidence="8" ref="4">
    <original>V</original>
    <variation>I</variation>
    <location>
        <position position="916"/>
    </location>
</feature>
<feature type="sequence conflict" description="In Ref. 7; AAH67394/AAH67409." evidence="8" ref="7">
    <original>F</original>
    <variation>S</variation>
    <location>
        <position position="1077"/>
    </location>
</feature>
<feature type="sequence conflict" description="In Ref. 14; AAC42021." evidence="8" ref="14">
    <original>V</original>
    <variation>A</variation>
    <location>
        <position position="1119"/>
    </location>
</feature>
<feature type="sequence conflict" description="In Ref. 14; AAC42021." evidence="8" ref="14">
    <original>A</original>
    <variation>T</variation>
    <location>
        <position position="1190"/>
    </location>
</feature>
<feature type="sequence conflict" description="In Ref. 4; BAE34280/BAE34429, 7; AAH67394/AAH67409 and 12; AAA40487." evidence="8" ref="4 7 12">
    <original>R</original>
    <variation>Q</variation>
    <location>
        <position position="1206"/>
    </location>
</feature>
<feature type="sequence conflict" description="In Ref. 15; AAC42022." evidence="8" ref="15">
    <original>S</original>
    <variation>N</variation>
    <location>
        <position position="1290"/>
    </location>
</feature>
<feature type="sequence conflict" description="In Ref. 2; AAA39506, 3; AAA39561 and 14; AAC42021." evidence="8" ref="2 3 14">
    <original>N</original>
    <variation>K</variation>
    <location>
        <position position="1324"/>
    </location>
</feature>
<feature type="sequence conflict" description="In Ref. 4; BAE34429." evidence="8" ref="4">
    <original>K</original>
    <variation>E</variation>
    <location>
        <position position="1365"/>
    </location>
</feature>
<feature type="sequence conflict" description="In Ref. 16; AAA39554." evidence="8" ref="16">
    <original>G</original>
    <variation>S</variation>
    <location>
        <position position="1401"/>
    </location>
</feature>
<feature type="sequence conflict" description="In Ref. 1; AAA39557." evidence="8" ref="1">
    <original>R</original>
    <variation>K</variation>
    <location>
        <position position="1442"/>
    </location>
</feature>
<feature type="sequence conflict" description="In Ref. 2; AAA39506, 3; AAA39561, 4; BAE34429 and 16; AAA39554." evidence="8" ref="2 3 4 16">
    <original>V</original>
    <variation>A</variation>
    <location>
        <position position="1453"/>
    </location>
</feature>
<feature type="sequence conflict" description="In Ref. 4; BAE34429." evidence="8" ref="4">
    <original>Q</original>
    <variation>R</variation>
    <location>
        <position position="1456"/>
    </location>
</feature>
<feature type="sequence conflict" description="In Ref. 10; CAA28936." evidence="8" ref="10">
    <original>E</original>
    <variation>Q</variation>
    <location>
        <position position="1586"/>
    </location>
</feature>
<feature type="sequence conflict" description="In Ref. 5; AAC05279." evidence="8" ref="5">
    <original>A</original>
    <variation>T</variation>
    <location>
        <position position="1611"/>
    </location>
</feature>
<keyword id="KW-0165">Cleavage on pair of basic residues</keyword>
<keyword id="KW-0180">Complement pathway</keyword>
<keyword id="KW-1015">Disulfide bond</keyword>
<keyword id="KW-0325">Glycoprotein</keyword>
<keyword id="KW-0391">Immunity</keyword>
<keyword id="KW-0395">Inflammatory response</keyword>
<keyword id="KW-0399">Innate immunity</keyword>
<keyword id="KW-0597">Phosphoprotein</keyword>
<keyword id="KW-1185">Reference proteome</keyword>
<keyword id="KW-0964">Secreted</keyword>
<keyword id="KW-0732">Signal</keyword>
<keyword id="KW-0765">Sulfation</keyword>
<keyword id="KW-0882">Thioester bond</keyword>
<name>CO4B_MOUSE</name>
<accession>P01029</accession>
<accession>E9QKK7</accession>
<accession>O70346</accession>
<accession>Q31201</accession>
<accession>Q3TYY1</accession>
<accession>Q3TZC9</accession>
<accession>Q61372</accession>
<accession>Q61859</accession>
<accession>Q62353</accession>
<accession>Q6NWV8</accession>
<dbReference type="EMBL" id="M11789">
    <property type="protein sequence ID" value="AAA39557.1"/>
    <property type="molecule type" value="Genomic_DNA"/>
</dbReference>
<dbReference type="EMBL" id="M11729">
    <property type="protein sequence ID" value="AAA39506.1"/>
    <property type="molecule type" value="mRNA"/>
</dbReference>
<dbReference type="EMBL" id="M17440">
    <property type="protein sequence ID" value="AAA39561.1"/>
    <property type="molecule type" value="Genomic_DNA"/>
</dbReference>
<dbReference type="EMBL" id="AK157954">
    <property type="protein sequence ID" value="BAE34280.1"/>
    <property type="molecule type" value="mRNA"/>
</dbReference>
<dbReference type="EMBL" id="AK158256">
    <property type="protein sequence ID" value="BAE34429.1"/>
    <property type="molecule type" value="mRNA"/>
</dbReference>
<dbReference type="EMBL" id="AF049850">
    <property type="protein sequence ID" value="AAC05279.1"/>
    <property type="molecule type" value="Genomic_DNA"/>
</dbReference>
<dbReference type="EMBL" id="CT573030">
    <property type="status" value="NOT_ANNOTATED_CDS"/>
    <property type="molecule type" value="Genomic_DNA"/>
</dbReference>
<dbReference type="EMBL" id="BC067394">
    <property type="protein sequence ID" value="AAH67394.1"/>
    <property type="molecule type" value="mRNA"/>
</dbReference>
<dbReference type="EMBL" id="BC067409">
    <property type="protein sequence ID" value="AAH67409.1"/>
    <property type="molecule type" value="mRNA"/>
</dbReference>
<dbReference type="EMBL" id="M12968">
    <property type="protein sequence ID" value="AAA39558.1"/>
    <property type="molecule type" value="Genomic_DNA"/>
</dbReference>
<dbReference type="EMBL" id="M12969">
    <property type="protein sequence ID" value="AAA39559.1"/>
    <property type="molecule type" value="Genomic_DNA"/>
</dbReference>
<dbReference type="EMBL" id="M14225">
    <property type="protein sequence ID" value="AAA39563.1"/>
    <property type="molecule type" value="Genomic_DNA"/>
</dbReference>
<dbReference type="EMBL" id="X05314">
    <property type="protein sequence ID" value="CAA28936.1"/>
    <property type="molecule type" value="mRNA"/>
</dbReference>
<dbReference type="EMBL" id="M12970">
    <property type="protein sequence ID" value="AAA39555.1"/>
    <property type="molecule type" value="mRNA"/>
</dbReference>
<dbReference type="EMBL" id="M12972">
    <property type="protein sequence ID" value="AAA39556.1"/>
    <property type="molecule type" value="mRNA"/>
</dbReference>
<dbReference type="EMBL" id="M23186">
    <property type="protein sequence ID" value="AAA40487.1"/>
    <property type="molecule type" value="Genomic_DNA"/>
</dbReference>
<dbReference type="EMBL" id="X55493">
    <property type="protein sequence ID" value="CAA39112.1"/>
    <property type="molecule type" value="Genomic_DNA"/>
</dbReference>
<dbReference type="EMBL" id="X55495">
    <property type="protein sequence ID" value="CAA39114.1"/>
    <property type="molecule type" value="Genomic_DNA"/>
</dbReference>
<dbReference type="EMBL" id="K02798">
    <property type="protein sequence ID" value="AAC42021.1"/>
    <property type="molecule type" value="mRNA"/>
</dbReference>
<dbReference type="EMBL" id="K02799">
    <property type="protein sequence ID" value="AAC42022.1"/>
    <property type="molecule type" value="mRNA"/>
</dbReference>
<dbReference type="EMBL" id="K00019">
    <property type="protein sequence ID" value="AAA39554.1"/>
    <property type="molecule type" value="mRNA"/>
</dbReference>
<dbReference type="CCDS" id="CCDS28657.1"/>
<dbReference type="PIR" id="A24558">
    <property type="entry name" value="A24558"/>
</dbReference>
<dbReference type="PIR" id="A29176">
    <property type="entry name" value="A29176"/>
</dbReference>
<dbReference type="RefSeq" id="NP_033910.2">
    <property type="nucleotide sequence ID" value="NM_009780.2"/>
</dbReference>
<dbReference type="SMR" id="P01029"/>
<dbReference type="BioGRID" id="198420">
    <property type="interactions" value="17"/>
</dbReference>
<dbReference type="ComplexPortal" id="CPX-6198">
    <property type="entry name" value="Classical and lectin pathway C3 convertase complex C4b2a-B"/>
</dbReference>
<dbReference type="FunCoup" id="P01029">
    <property type="interactions" value="67"/>
</dbReference>
<dbReference type="STRING" id="10090.ENSMUSP00000069418"/>
<dbReference type="MEROPS" id="I39.951"/>
<dbReference type="GlyConnect" id="720">
    <property type="glycosylation" value="2 N-Linked glycans (1 site)"/>
</dbReference>
<dbReference type="GlyCosmos" id="P01029">
    <property type="glycosylation" value="4 sites, 4 glycans"/>
</dbReference>
<dbReference type="GlyGen" id="P01029">
    <property type="glycosylation" value="7 sites, 6 N-linked glycans (3 sites), 1 O-linked glycan (1 site)"/>
</dbReference>
<dbReference type="iPTMnet" id="P01029"/>
<dbReference type="PhosphoSitePlus" id="P01029"/>
<dbReference type="SwissPalm" id="P01029"/>
<dbReference type="CPTAC" id="non-CPTAC-3339"/>
<dbReference type="jPOST" id="P01029"/>
<dbReference type="PaxDb" id="10090-ENSMUSP00000069418"/>
<dbReference type="ProteomicsDB" id="279132"/>
<dbReference type="Pumba" id="P01029"/>
<dbReference type="DNASU" id="12268"/>
<dbReference type="Ensembl" id="ENSMUST00000069507.9">
    <property type="protein sequence ID" value="ENSMUSP00000069418.9"/>
    <property type="gene ID" value="ENSMUSG00000073418.5"/>
</dbReference>
<dbReference type="GeneID" id="12268"/>
<dbReference type="KEGG" id="mmu:12268"/>
<dbReference type="UCSC" id="uc008cdk.2">
    <property type="organism name" value="mouse"/>
</dbReference>
<dbReference type="AGR" id="MGI:88228"/>
<dbReference type="CTD" id="721"/>
<dbReference type="MGI" id="MGI:88228">
    <property type="gene designation" value="C4b"/>
</dbReference>
<dbReference type="VEuPathDB" id="HostDB:ENSMUSG00000073418"/>
<dbReference type="eggNOG" id="KOG1366">
    <property type="taxonomic scope" value="Eukaryota"/>
</dbReference>
<dbReference type="GeneTree" id="ENSGT00940000155739"/>
<dbReference type="HOGENOM" id="CLU_001634_4_1_1"/>
<dbReference type="InParanoid" id="P01029"/>
<dbReference type="OMA" id="AANWLTH"/>
<dbReference type="OrthoDB" id="6359008at2759"/>
<dbReference type="PhylomeDB" id="P01029"/>
<dbReference type="TreeFam" id="TF313285"/>
<dbReference type="Reactome" id="R-MMU-166663">
    <property type="pathway name" value="Initial triggering of complement"/>
</dbReference>
<dbReference type="Reactome" id="R-MMU-174577">
    <property type="pathway name" value="Activation of C3 and C5"/>
</dbReference>
<dbReference type="Reactome" id="R-MMU-381426">
    <property type="pathway name" value="Regulation of Insulin-like Growth Factor (IGF) transport and uptake by Insulin-like Growth Factor Binding Proteins (IGFBPs)"/>
</dbReference>
<dbReference type="Reactome" id="R-MMU-8957275">
    <property type="pathway name" value="Post-translational protein phosphorylation"/>
</dbReference>
<dbReference type="Reactome" id="R-MMU-977606">
    <property type="pathway name" value="Regulation of Complement cascade"/>
</dbReference>
<dbReference type="BioGRID-ORCS" id="12268">
    <property type="hits" value="3 hits in 78 CRISPR screens"/>
</dbReference>
<dbReference type="ChiTaRS" id="C4b">
    <property type="organism name" value="mouse"/>
</dbReference>
<dbReference type="PRO" id="PR:P01029"/>
<dbReference type="Proteomes" id="UP000000589">
    <property type="component" value="Chromosome 17"/>
</dbReference>
<dbReference type="RNAct" id="P01029">
    <property type="molecule type" value="protein"/>
</dbReference>
<dbReference type="Bgee" id="ENSMUSG00000073418">
    <property type="expression patterns" value="Expressed in epididymal fat pad and 59 other cell types or tissues"/>
</dbReference>
<dbReference type="ExpressionAtlas" id="P01029">
    <property type="expression patterns" value="baseline and differential"/>
</dbReference>
<dbReference type="GO" id="GO:0030424">
    <property type="term" value="C:axon"/>
    <property type="evidence" value="ECO:0007669"/>
    <property type="project" value="UniProtKB-SubCell"/>
</dbReference>
<dbReference type="GO" id="GO:0030425">
    <property type="term" value="C:dendrite"/>
    <property type="evidence" value="ECO:0007669"/>
    <property type="project" value="UniProtKB-SubCell"/>
</dbReference>
<dbReference type="GO" id="GO:0005615">
    <property type="term" value="C:extracellular space"/>
    <property type="evidence" value="ECO:0000314"/>
    <property type="project" value="MGI"/>
</dbReference>
<dbReference type="GO" id="GO:0045202">
    <property type="term" value="C:synapse"/>
    <property type="evidence" value="ECO:0007669"/>
    <property type="project" value="UniProtKB-SubCell"/>
</dbReference>
<dbReference type="GO" id="GO:0004866">
    <property type="term" value="F:endopeptidase inhibitor activity"/>
    <property type="evidence" value="ECO:0007669"/>
    <property type="project" value="InterPro"/>
</dbReference>
<dbReference type="GO" id="GO:0006956">
    <property type="term" value="P:complement activation"/>
    <property type="evidence" value="ECO:0000315"/>
    <property type="project" value="MGI"/>
</dbReference>
<dbReference type="GO" id="GO:0006958">
    <property type="term" value="P:complement activation, classical pathway"/>
    <property type="evidence" value="ECO:0007669"/>
    <property type="project" value="UniProtKB-KW"/>
</dbReference>
<dbReference type="GO" id="GO:0016064">
    <property type="term" value="P:immunoglobulin mediated immune response"/>
    <property type="evidence" value="ECO:0000315"/>
    <property type="project" value="MGI"/>
</dbReference>
<dbReference type="GO" id="GO:0006954">
    <property type="term" value="P:inflammatory response"/>
    <property type="evidence" value="ECO:0007669"/>
    <property type="project" value="UniProtKB-KW"/>
</dbReference>
<dbReference type="GO" id="GO:0045087">
    <property type="term" value="P:innate immune response"/>
    <property type="evidence" value="ECO:0007669"/>
    <property type="project" value="UniProtKB-KW"/>
</dbReference>
<dbReference type="CDD" id="cd00017">
    <property type="entry name" value="ANATO"/>
    <property type="match status" value="1"/>
</dbReference>
<dbReference type="CDD" id="cd02896">
    <property type="entry name" value="complement_C3_C4_C5"/>
    <property type="match status" value="1"/>
</dbReference>
<dbReference type="FunFam" id="2.60.40.10:FF:000155">
    <property type="entry name" value="complement C3 isoform X1"/>
    <property type="match status" value="1"/>
</dbReference>
<dbReference type="FunFam" id="1.20.91.20:FF:000006">
    <property type="entry name" value="Complement C4"/>
    <property type="match status" value="1"/>
</dbReference>
<dbReference type="FunFam" id="2.60.40.690:FF:000002">
    <property type="entry name" value="Complement C4 isoform-A"/>
    <property type="match status" value="1"/>
</dbReference>
<dbReference type="FunFam" id="1.50.10.20:FF:000010">
    <property type="entry name" value="Complement C4-A"/>
    <property type="match status" value="1"/>
</dbReference>
<dbReference type="FunFam" id="2.20.130.20:FF:000002">
    <property type="entry name" value="Complement C4-A"/>
    <property type="match status" value="1"/>
</dbReference>
<dbReference type="FunFam" id="2.40.50.120:FF:000009">
    <property type="entry name" value="Complement C4-A"/>
    <property type="match status" value="1"/>
</dbReference>
<dbReference type="FunFam" id="2.60.120.1540:FF:000001">
    <property type="entry name" value="Complement C4-A"/>
    <property type="match status" value="1"/>
</dbReference>
<dbReference type="FunFam" id="2.60.40.10:FF:000803">
    <property type="entry name" value="Complement C4-A"/>
    <property type="match status" value="1"/>
</dbReference>
<dbReference type="FunFam" id="2.60.40.1930:FF:000004">
    <property type="entry name" value="Complement C4-A"/>
    <property type="match status" value="1"/>
</dbReference>
<dbReference type="FunFam" id="2.60.40.1930:FF:000007">
    <property type="entry name" value="Complement C4-A"/>
    <property type="match status" value="1"/>
</dbReference>
<dbReference type="FunFam" id="2.60.40.1930:FF:000005">
    <property type="entry name" value="complement C4-A isoform X3"/>
    <property type="match status" value="1"/>
</dbReference>
<dbReference type="FunFam" id="6.20.50.160:FF:000001">
    <property type="entry name" value="Complement component 4"/>
    <property type="match status" value="1"/>
</dbReference>
<dbReference type="FunFam" id="2.60.40.1940:FF:000001">
    <property type="entry name" value="Complement component C3"/>
    <property type="match status" value="1"/>
</dbReference>
<dbReference type="FunFam" id="2.60.120.1540:FF:000006">
    <property type="entry name" value="MHC-linked complement C4"/>
    <property type="match status" value="1"/>
</dbReference>
<dbReference type="Gene3D" id="1.50.10.20">
    <property type="match status" value="1"/>
</dbReference>
<dbReference type="Gene3D" id="2.20.130.20">
    <property type="match status" value="1"/>
</dbReference>
<dbReference type="Gene3D" id="2.40.50.120">
    <property type="match status" value="1"/>
</dbReference>
<dbReference type="Gene3D" id="2.60.120.1540">
    <property type="match status" value="2"/>
</dbReference>
<dbReference type="Gene3D" id="2.60.40.1930">
    <property type="match status" value="3"/>
</dbReference>
<dbReference type="Gene3D" id="2.60.40.1940">
    <property type="match status" value="1"/>
</dbReference>
<dbReference type="Gene3D" id="6.20.50.160">
    <property type="match status" value="1"/>
</dbReference>
<dbReference type="Gene3D" id="2.60.40.690">
    <property type="entry name" value="Alpha-macroglobulin, receptor-binding domain"/>
    <property type="match status" value="1"/>
</dbReference>
<dbReference type="Gene3D" id="1.20.91.20">
    <property type="entry name" value="Anaphylotoxins (complement system)"/>
    <property type="match status" value="1"/>
</dbReference>
<dbReference type="Gene3D" id="2.60.40.10">
    <property type="entry name" value="Immunoglobulins"/>
    <property type="match status" value="2"/>
</dbReference>
<dbReference type="InterPro" id="IPR009048">
    <property type="entry name" value="A-macroglobulin_rcpt-bd"/>
</dbReference>
<dbReference type="InterPro" id="IPR036595">
    <property type="entry name" value="A-macroglobulin_rcpt-bd_sf"/>
</dbReference>
<dbReference type="InterPro" id="IPR050473">
    <property type="entry name" value="A2M/Complement_sys"/>
</dbReference>
<dbReference type="InterPro" id="IPR011625">
    <property type="entry name" value="A2M_N_BRD"/>
</dbReference>
<dbReference type="InterPro" id="IPR047565">
    <property type="entry name" value="Alpha-macroglob_thiol-ester_cl"/>
</dbReference>
<dbReference type="InterPro" id="IPR011626">
    <property type="entry name" value="Alpha-macroglobulin_TED"/>
</dbReference>
<dbReference type="InterPro" id="IPR000020">
    <property type="entry name" value="Anaphylatoxin/fibulin"/>
</dbReference>
<dbReference type="InterPro" id="IPR018081">
    <property type="entry name" value="Anaphylatoxin_comp_syst"/>
</dbReference>
<dbReference type="InterPro" id="IPR001840">
    <property type="entry name" value="Anaphylatoxn_comp_syst_dom"/>
</dbReference>
<dbReference type="InterPro" id="IPR048847">
    <property type="entry name" value="C4_MG1"/>
</dbReference>
<dbReference type="InterPro" id="IPR054587">
    <property type="entry name" value="CO4A-B_CUB_C"/>
</dbReference>
<dbReference type="InterPro" id="IPR013783">
    <property type="entry name" value="Ig-like_fold"/>
</dbReference>
<dbReference type="InterPro" id="IPR001599">
    <property type="entry name" value="Macroglobln_a2"/>
</dbReference>
<dbReference type="InterPro" id="IPR019742">
    <property type="entry name" value="MacrogloblnA2_CS"/>
</dbReference>
<dbReference type="InterPro" id="IPR002890">
    <property type="entry name" value="MG2"/>
</dbReference>
<dbReference type="InterPro" id="IPR041555">
    <property type="entry name" value="MG3"/>
</dbReference>
<dbReference type="InterPro" id="IPR001134">
    <property type="entry name" value="Netrin_domain"/>
</dbReference>
<dbReference type="InterPro" id="IPR018933">
    <property type="entry name" value="Netrin_module_non-TIMP"/>
</dbReference>
<dbReference type="InterPro" id="IPR008930">
    <property type="entry name" value="Terpenoid_cyclase/PrenylTrfase"/>
</dbReference>
<dbReference type="InterPro" id="IPR008993">
    <property type="entry name" value="TIMP-like_OB-fold"/>
</dbReference>
<dbReference type="PANTHER" id="PTHR11412:SF86">
    <property type="entry name" value="COMPLEMENT C4-A-RELATED"/>
    <property type="match status" value="1"/>
</dbReference>
<dbReference type="PANTHER" id="PTHR11412">
    <property type="entry name" value="MACROGLOBULIN / COMPLEMENT"/>
    <property type="match status" value="1"/>
</dbReference>
<dbReference type="Pfam" id="PF00207">
    <property type="entry name" value="A2M"/>
    <property type="match status" value="1"/>
</dbReference>
<dbReference type="Pfam" id="PF07703">
    <property type="entry name" value="A2M_BRD"/>
    <property type="match status" value="1"/>
</dbReference>
<dbReference type="Pfam" id="PF07677">
    <property type="entry name" value="A2M_recep"/>
    <property type="match status" value="1"/>
</dbReference>
<dbReference type="Pfam" id="PF01821">
    <property type="entry name" value="ANATO"/>
    <property type="match status" value="1"/>
</dbReference>
<dbReference type="Pfam" id="PF21145">
    <property type="entry name" value="C4_MG1"/>
    <property type="match status" value="1"/>
</dbReference>
<dbReference type="Pfam" id="PF22661">
    <property type="entry name" value="CO4A-B_CUB_C"/>
    <property type="match status" value="1"/>
</dbReference>
<dbReference type="Pfam" id="PF01835">
    <property type="entry name" value="MG2"/>
    <property type="match status" value="1"/>
</dbReference>
<dbReference type="Pfam" id="PF17791">
    <property type="entry name" value="MG3"/>
    <property type="match status" value="1"/>
</dbReference>
<dbReference type="Pfam" id="PF01759">
    <property type="entry name" value="NTR"/>
    <property type="match status" value="1"/>
</dbReference>
<dbReference type="Pfam" id="PF07678">
    <property type="entry name" value="TED_complement"/>
    <property type="match status" value="1"/>
</dbReference>
<dbReference type="PRINTS" id="PR00004">
    <property type="entry name" value="ANAPHYLATOXN"/>
</dbReference>
<dbReference type="SMART" id="SM01360">
    <property type="entry name" value="A2M"/>
    <property type="match status" value="1"/>
</dbReference>
<dbReference type="SMART" id="SM01359">
    <property type="entry name" value="A2M_N_2"/>
    <property type="match status" value="1"/>
</dbReference>
<dbReference type="SMART" id="SM01361">
    <property type="entry name" value="A2M_recep"/>
    <property type="match status" value="1"/>
</dbReference>
<dbReference type="SMART" id="SM00104">
    <property type="entry name" value="ANATO"/>
    <property type="match status" value="1"/>
</dbReference>
<dbReference type="SMART" id="SM00643">
    <property type="entry name" value="C345C"/>
    <property type="match status" value="1"/>
</dbReference>
<dbReference type="SMART" id="SM01419">
    <property type="entry name" value="Thiol-ester_cl"/>
    <property type="match status" value="1"/>
</dbReference>
<dbReference type="SUPFAM" id="SSF49410">
    <property type="entry name" value="Alpha-macroglobulin receptor domain"/>
    <property type="match status" value="1"/>
</dbReference>
<dbReference type="SUPFAM" id="SSF47686">
    <property type="entry name" value="Anaphylotoxins (complement system)"/>
    <property type="match status" value="1"/>
</dbReference>
<dbReference type="SUPFAM" id="SSF48239">
    <property type="entry name" value="Terpenoid cyclases/Protein prenyltransferases"/>
    <property type="match status" value="1"/>
</dbReference>
<dbReference type="SUPFAM" id="SSF50242">
    <property type="entry name" value="TIMP-like"/>
    <property type="match status" value="1"/>
</dbReference>
<dbReference type="PROSITE" id="PS00477">
    <property type="entry name" value="ALPHA_2_MACROGLOBULIN"/>
    <property type="match status" value="1"/>
</dbReference>
<dbReference type="PROSITE" id="PS01177">
    <property type="entry name" value="ANAPHYLATOXIN_1"/>
    <property type="match status" value="1"/>
</dbReference>
<dbReference type="PROSITE" id="PS01178">
    <property type="entry name" value="ANAPHYLATOXIN_2"/>
    <property type="match status" value="1"/>
</dbReference>
<dbReference type="PROSITE" id="PS50189">
    <property type="entry name" value="NTR"/>
    <property type="match status" value="1"/>
</dbReference>
<sequence>MRLLWGLAWVFSFCASSLQKPRLLLFSPSVVNLGTPLSVGVQLLDAPPGQEVKGSVFLRNPKGGSCSPKKDFKLSSGDDFVLLSLEVPLEDVRSCGLFDLRRAPHIQLVAQSPWLRNTAFKATETQGVNLLFSSRRGHIFVQTDQPIYNPGQRVRYRVFALDQKMRPSTDFLTITVENSHGLRVLKKEIFTSTSIFQDAFTIPDISEPGTWKISARFSDGLESNRSTHFEVKKYVLPNFEVKITPWKPYILMVPSNSDEIQLDIQARYIYGKPVQGVAYTRFALMDEQGKRTFLRGLETQAKLVEGRTHISISKDQFQAALDKINIGVRDLEGLRLYAATAVIESPGGEMEEAELTSWRFVSSAFSLDLSRTKRHLVPGAHFLLQALVQEMSGSEASNVPVKVSATLVSGSDSQVLDIQQSTNGIGQVSISFPIPPTVTELRLLVSAGSLYPAIARLTVQAPPSRGTGFLSIEPLDPRSPSVGDTFILNLQPVGIPAPTFSHYYYMIISRGQIMAMGREPRKTVTSVSVLVDHQLAPSFYFVAYFYHQGHPVANSLLINIQSRDCEGKLQLKVDGAKEYRNADMMKLRIQTDSKALVALGAVDMALYAVGGRSHKPLDMSKVFEVINSYNVGCGPGGGDDALQVFQDAGLAFSDGDRLTQTREDLSCPKEKKSRQKRNVNFQKAVSEKLGQYSSPDAKRCCQDGMTKLPMKRTCEQRAARVPQQACREPFLSCCKFAEDLRRNQTRSQAHLARNNHNMLQEEDLIDEDDILVRTSFPENWLWRVEPVDSSKLLTVWLPDSMTTWEIHGVSLSKSKGLCVAKPTRVRVFRKFHLHLRLPISIRRFEQFELRPVLYNYLNDDVAVSVHVTPVEGLCLAGGGMMAQQVTVPAGSARPVAFSVVPTAAANVPLKVVARGVFDLGDAVSKILQIEKEGAIHREELVYNLDPLNNLGRTLEIPGSSDPNIVPDGDFSSLVRVTASEPLETMGSEGALSPGGVASLLRLPQGCAEQTMIYLAPTLTASNYLDRTEQWSKLSPETKDHAVDLIQKGYMRIQQFRKNDGSFGAWLHRDSSTWLTAFVLKILSLAQEQVGNSPEKLQETASWLLAQQLGDGSFHDPCPVIHRAMQGGLVGSDETVALTAFVVIALHHGLDVFQDDDAKQLKNRVEASITKANSFLGQKASAGLLGAHAAAITAYALTLTKASEDLRNVAHNSLMAMAEETGEHLYWGLVLGSQDKVVLRPTAPRSPTEPVPQAPALWIETTAYALLHLLLREGKGKMADKAASWLTHQGSFHGAFRSTQDTVVTLDALSAYWIASHTTEEKALNVTLSSMGRNGLKTHGLHLNNHQVKGLEEELKFSLGSTISVKVEGNSKGTLKILRTYNVLDMKNTTCQDLQIEVKVTGAVEYAWDANEDYEDYYDMPAADDPSVPLQPVTPLQLFEGRRSRRRREAPKVVEEQESRVQYTVCIWRNGKLGLSGMAIADITLLSGFHALRADLEKLTSLSDRYVSHFETDGPHVLLYFDSVPTTRECVGFGASQEVVVGLVQPSSAVLYDYYSPDHKCSVFYAAPTKSQLLATLCSGDVCQCAEGKCPRLLRSLERRVEDKDGYRMRFACYYPRVEYGFTVKVLREDGRAAFRLFESKITQVLHFRKDTMASIGQTRNFLSRASCRLRLEPNKEYLIMGMDGETSDNKGDPQYLLDSNTWIEEMPSEQMCKSTRHRAACFQLKDFLMEFSSRGCQV</sequence>
<protein>
    <recommendedName>
        <fullName>Complement C4-B</fullName>
    </recommendedName>
    <component>
        <recommendedName>
            <fullName>Complement C4 beta chain</fullName>
        </recommendedName>
    </component>
    <component>
        <recommendedName>
            <fullName>Complement C4 alpha chain</fullName>
        </recommendedName>
    </component>
    <component>
        <recommendedName>
            <fullName>C4a anaphylatoxin</fullName>
        </recommendedName>
    </component>
    <component>
        <recommendedName>
            <fullName>Complement C4b-B</fullName>
        </recommendedName>
    </component>
    <component>
        <recommendedName>
            <fullName>Complement C4 gamma chain</fullName>
        </recommendedName>
    </component>
</protein>
<gene>
    <name evidence="9" type="primary">C4b</name>
    <name type="synonym">C4</name>
</gene>
<reference key="1">
    <citation type="journal article" date="1985" name="J. Biol. Chem.">
        <title>Complete nucleotide and derived amino acid sequences of the fourth component of mouse complement (C4). Evolutionary aspects.</title>
        <authorList>
            <person name="Nonaka M."/>
            <person name="Nakayama K."/>
            <person name="Yeul Y.D."/>
            <person name="Takahashi M."/>
        </authorList>
    </citation>
    <scope>NUCLEOTIDE SEQUENCE [GENOMIC DNA]</scope>
    <source>
        <strain>FM</strain>
    </source>
</reference>
<reference key="2">
    <citation type="journal article" date="1985" name="Proc. Natl. Acad. Sci. U.S.A.">
        <title>Complete cDNA sequence of the fourth component of murine complement.</title>
        <authorList>
            <person name="Sepich D.S."/>
            <person name="Noonan D.J."/>
            <person name="Ogata R.T."/>
        </authorList>
    </citation>
    <scope>NUCLEOTIDE SEQUENCE [MRNA]</scope>
    <source>
        <strain>B10.WR</strain>
    </source>
</reference>
<reference key="3">
    <citation type="journal article" date="1989" name="J. Biol. Chem.">
        <title>Sequence of the gene for murine complement component C4.</title>
        <authorList>
            <person name="Ogata R.T."/>
            <person name="Rosa P.A."/>
            <person name="Zepf N.E."/>
        </authorList>
    </citation>
    <scope>NUCLEOTIDE SEQUENCE [GENOMIC DNA]</scope>
    <source>
        <strain>B10.WR</strain>
    </source>
</reference>
<reference key="4">
    <citation type="journal article" date="2005" name="Science">
        <title>The transcriptional landscape of the mammalian genome.</title>
        <authorList>
            <person name="Carninci P."/>
            <person name="Kasukawa T."/>
            <person name="Katayama S."/>
            <person name="Gough J."/>
            <person name="Frith M.C."/>
            <person name="Maeda N."/>
            <person name="Oyama R."/>
            <person name="Ravasi T."/>
            <person name="Lenhard B."/>
            <person name="Wells C."/>
            <person name="Kodzius R."/>
            <person name="Shimokawa K."/>
            <person name="Bajic V.B."/>
            <person name="Brenner S.E."/>
            <person name="Batalov S."/>
            <person name="Forrest A.R."/>
            <person name="Zavolan M."/>
            <person name="Davis M.J."/>
            <person name="Wilming L.G."/>
            <person name="Aidinis V."/>
            <person name="Allen J.E."/>
            <person name="Ambesi-Impiombato A."/>
            <person name="Apweiler R."/>
            <person name="Aturaliya R.N."/>
            <person name="Bailey T.L."/>
            <person name="Bansal M."/>
            <person name="Baxter L."/>
            <person name="Beisel K.W."/>
            <person name="Bersano T."/>
            <person name="Bono H."/>
            <person name="Chalk A.M."/>
            <person name="Chiu K.P."/>
            <person name="Choudhary V."/>
            <person name="Christoffels A."/>
            <person name="Clutterbuck D.R."/>
            <person name="Crowe M.L."/>
            <person name="Dalla E."/>
            <person name="Dalrymple B.P."/>
            <person name="de Bono B."/>
            <person name="Della Gatta G."/>
            <person name="di Bernardo D."/>
            <person name="Down T."/>
            <person name="Engstrom P."/>
            <person name="Fagiolini M."/>
            <person name="Faulkner G."/>
            <person name="Fletcher C.F."/>
            <person name="Fukushima T."/>
            <person name="Furuno M."/>
            <person name="Futaki S."/>
            <person name="Gariboldi M."/>
            <person name="Georgii-Hemming P."/>
            <person name="Gingeras T.R."/>
            <person name="Gojobori T."/>
            <person name="Green R.E."/>
            <person name="Gustincich S."/>
            <person name="Harbers M."/>
            <person name="Hayashi Y."/>
            <person name="Hensch T.K."/>
            <person name="Hirokawa N."/>
            <person name="Hill D."/>
            <person name="Huminiecki L."/>
            <person name="Iacono M."/>
            <person name="Ikeo K."/>
            <person name="Iwama A."/>
            <person name="Ishikawa T."/>
            <person name="Jakt M."/>
            <person name="Kanapin A."/>
            <person name="Katoh M."/>
            <person name="Kawasawa Y."/>
            <person name="Kelso J."/>
            <person name="Kitamura H."/>
            <person name="Kitano H."/>
            <person name="Kollias G."/>
            <person name="Krishnan S.P."/>
            <person name="Kruger A."/>
            <person name="Kummerfeld S.K."/>
            <person name="Kurochkin I.V."/>
            <person name="Lareau L.F."/>
            <person name="Lazarevic D."/>
            <person name="Lipovich L."/>
            <person name="Liu J."/>
            <person name="Liuni S."/>
            <person name="McWilliam S."/>
            <person name="Madan Babu M."/>
            <person name="Madera M."/>
            <person name="Marchionni L."/>
            <person name="Matsuda H."/>
            <person name="Matsuzawa S."/>
            <person name="Miki H."/>
            <person name="Mignone F."/>
            <person name="Miyake S."/>
            <person name="Morris K."/>
            <person name="Mottagui-Tabar S."/>
            <person name="Mulder N."/>
            <person name="Nakano N."/>
            <person name="Nakauchi H."/>
            <person name="Ng P."/>
            <person name="Nilsson R."/>
            <person name="Nishiguchi S."/>
            <person name="Nishikawa S."/>
            <person name="Nori F."/>
            <person name="Ohara O."/>
            <person name="Okazaki Y."/>
            <person name="Orlando V."/>
            <person name="Pang K.C."/>
            <person name="Pavan W.J."/>
            <person name="Pavesi G."/>
            <person name="Pesole G."/>
            <person name="Petrovsky N."/>
            <person name="Piazza S."/>
            <person name="Reed J."/>
            <person name="Reid J.F."/>
            <person name="Ring B.Z."/>
            <person name="Ringwald M."/>
            <person name="Rost B."/>
            <person name="Ruan Y."/>
            <person name="Salzberg S.L."/>
            <person name="Sandelin A."/>
            <person name="Schneider C."/>
            <person name="Schoenbach C."/>
            <person name="Sekiguchi K."/>
            <person name="Semple C.A."/>
            <person name="Seno S."/>
            <person name="Sessa L."/>
            <person name="Sheng Y."/>
            <person name="Shibata Y."/>
            <person name="Shimada H."/>
            <person name="Shimada K."/>
            <person name="Silva D."/>
            <person name="Sinclair B."/>
            <person name="Sperling S."/>
            <person name="Stupka E."/>
            <person name="Sugiura K."/>
            <person name="Sultana R."/>
            <person name="Takenaka Y."/>
            <person name="Taki K."/>
            <person name="Tammoja K."/>
            <person name="Tan S.L."/>
            <person name="Tang S."/>
            <person name="Taylor M.S."/>
            <person name="Tegner J."/>
            <person name="Teichmann S.A."/>
            <person name="Ueda H.R."/>
            <person name="van Nimwegen E."/>
            <person name="Verardo R."/>
            <person name="Wei C.L."/>
            <person name="Yagi K."/>
            <person name="Yamanishi H."/>
            <person name="Zabarovsky E."/>
            <person name="Zhu S."/>
            <person name="Zimmer A."/>
            <person name="Hide W."/>
            <person name="Bult C."/>
            <person name="Grimmond S.M."/>
            <person name="Teasdale R.D."/>
            <person name="Liu E.T."/>
            <person name="Brusic V."/>
            <person name="Quackenbush J."/>
            <person name="Wahlestedt C."/>
            <person name="Mattick J.S."/>
            <person name="Hume D.A."/>
            <person name="Kai C."/>
            <person name="Sasaki D."/>
            <person name="Tomaru Y."/>
            <person name="Fukuda S."/>
            <person name="Kanamori-Katayama M."/>
            <person name="Suzuki M."/>
            <person name="Aoki J."/>
            <person name="Arakawa T."/>
            <person name="Iida J."/>
            <person name="Imamura K."/>
            <person name="Itoh M."/>
            <person name="Kato T."/>
            <person name="Kawaji H."/>
            <person name="Kawagashira N."/>
            <person name="Kawashima T."/>
            <person name="Kojima M."/>
            <person name="Kondo S."/>
            <person name="Konno H."/>
            <person name="Nakano K."/>
            <person name="Ninomiya N."/>
            <person name="Nishio T."/>
            <person name="Okada M."/>
            <person name="Plessy C."/>
            <person name="Shibata K."/>
            <person name="Shiraki T."/>
            <person name="Suzuki S."/>
            <person name="Tagami M."/>
            <person name="Waki K."/>
            <person name="Watahiki A."/>
            <person name="Okamura-Oho Y."/>
            <person name="Suzuki H."/>
            <person name="Kawai J."/>
            <person name="Hayashizaki Y."/>
        </authorList>
    </citation>
    <scope>NUCLEOTIDE SEQUENCE [LARGE SCALE MRNA]</scope>
    <source>
        <strain>C57BL/6J</strain>
        <tissue>Inner ear</tissue>
    </source>
</reference>
<reference key="5">
    <citation type="journal article" date="2003" name="Genome Res.">
        <title>Analysis of the gene-dense major histocompatibility complex class III region and its comparison to mouse.</title>
        <authorList>
            <person name="Xie T."/>
            <person name="Rowen L."/>
            <person name="Aguado B."/>
            <person name="Ahearn M.E."/>
            <person name="Madan A."/>
            <person name="Qin S."/>
            <person name="Campbell R.D."/>
            <person name="Hood L."/>
        </authorList>
    </citation>
    <scope>NUCLEOTIDE SEQUENCE [LARGE SCALE GENOMIC DNA]</scope>
    <source>
        <strain>129</strain>
    </source>
</reference>
<reference key="6">
    <citation type="journal article" date="2009" name="PLoS Biol.">
        <title>Lineage-specific biology revealed by a finished genome assembly of the mouse.</title>
        <authorList>
            <person name="Church D.M."/>
            <person name="Goodstadt L."/>
            <person name="Hillier L.W."/>
            <person name="Zody M.C."/>
            <person name="Goldstein S."/>
            <person name="She X."/>
            <person name="Bult C.J."/>
            <person name="Agarwala R."/>
            <person name="Cherry J.L."/>
            <person name="DiCuccio M."/>
            <person name="Hlavina W."/>
            <person name="Kapustin Y."/>
            <person name="Meric P."/>
            <person name="Maglott D."/>
            <person name="Birtle Z."/>
            <person name="Marques A.C."/>
            <person name="Graves T."/>
            <person name="Zhou S."/>
            <person name="Teague B."/>
            <person name="Potamousis K."/>
            <person name="Churas C."/>
            <person name="Place M."/>
            <person name="Herschleb J."/>
            <person name="Runnheim R."/>
            <person name="Forrest D."/>
            <person name="Amos-Landgraf J."/>
            <person name="Schwartz D.C."/>
            <person name="Cheng Z."/>
            <person name="Lindblad-Toh K."/>
            <person name="Eichler E.E."/>
            <person name="Ponting C.P."/>
        </authorList>
    </citation>
    <scope>NUCLEOTIDE SEQUENCE [LARGE SCALE GENOMIC DNA]</scope>
    <source>
        <strain>C57BL/6J</strain>
    </source>
</reference>
<reference key="7">
    <citation type="journal article" date="2004" name="Genome Res.">
        <title>The status, quality, and expansion of the NIH full-length cDNA project: the Mammalian Gene Collection (MGC).</title>
        <authorList>
            <consortium name="The MGC Project Team"/>
        </authorList>
    </citation>
    <scope>NUCLEOTIDE SEQUENCE [LARGE SCALE MRNA]</scope>
    <source>
        <strain>C57BL/6J</strain>
        <strain>CD-1</strain>
        <tissue>Germ cell</tissue>
        <tissue>Neural stem cell</tissue>
    </source>
</reference>
<reference key="8">
    <citation type="journal article" date="1985" name="Immunol. Rev.">
        <title>Molecular cloning and characterization of complementary and genomic DNA clones for mouse C4 and Slp.</title>
        <authorList>
            <person name="Nonaka M."/>
            <person name="Nakayama K."/>
            <person name="Yeul Y.D."/>
            <person name="Shimizu A."/>
            <person name="Takahashi M."/>
        </authorList>
    </citation>
    <scope>NUCLEOTIDE SEQUENCE [GENOMIC DNA] OF 1-128</scope>
    <source>
        <strain>FM</strain>
    </source>
</reference>
<reference key="9">
    <citation type="journal article" date="1986" name="Proc. Natl. Acad. Sci. U.S.A.">
        <title>Identification of the 5'-flanking regulatory region responsible for the difference in transcriptional control between mouse complement C4 and Slp genes.</title>
        <authorList>
            <person name="Nonaka M."/>
            <person name="Kimura H."/>
            <person name="Yeul Y.D."/>
            <person name="Yokoyama S."/>
            <person name="Nakayama K."/>
            <person name="Takahashi M."/>
        </authorList>
    </citation>
    <scope>NUCLEOTIDE SEQUENCE [GENOMIC DNA] OF 1-21</scope>
</reference>
<reference key="10">
    <citation type="journal article" date="1986" name="Nucleic Acids Res.">
        <title>Sequence comparison of alleles of the fourth component of complement (C4) and sex-limited protein (Slp).</title>
        <authorList>
            <person name="Hemenway C."/>
            <person name="Kalff M."/>
            <person name="Stavenhagen J."/>
            <person name="Walthall D."/>
            <person name="Robins D."/>
        </authorList>
    </citation>
    <scope>NUCLEOTIDE SEQUENCE [MRNA] OF 591-1738</scope>
    <source>
        <strain>C57BL/10 X DBA/2</strain>
    </source>
</reference>
<reference key="11">
    <citation type="journal article" date="1984" name="Proc. Natl. Acad. Sci. U.S.A.">
        <title>Isolation of cDNA clones specifying the fourth component of mouse complement and its isotype, sex-limited protein.</title>
        <authorList>
            <person name="Nonaka M."/>
            <person name="Takahashi M."/>
            <person name="Natsuume-Sakai S."/>
            <person name="Nonaka M."/>
            <person name="Tanaka S."/>
            <person name="Shimizu A."/>
            <person name="Honjo T."/>
        </authorList>
    </citation>
    <scope>NUCLEOTIDE SEQUENCE [MRNA] OF 651-810 AND 924-1083</scope>
</reference>
<reference key="12">
    <citation type="journal article" date="1988" name="J. Immunol.">
        <title>Structural basis for the C4d.1/C4d.2 serologic allotypes of murine complement component C4.</title>
        <authorList>
            <person name="Taillon-Miller P.A."/>
            <person name="Shreffler D.C."/>
        </authorList>
    </citation>
    <scope>NUCLEOTIDE SEQUENCE [GENOMIC DNA] OF 961-1290</scope>
</reference>
<reference key="13">
    <citation type="journal article" date="1990" name="Eur. J. Immunol.">
        <title>C4 from C4-high and C4-low mouse strains have identical sequences in the region corresponding to the isotype-specific segment of human C4.</title>
        <authorList>
            <person name="Ogata R.T."/>
            <person name="Zepf N.E."/>
        </authorList>
    </citation>
    <scope>NUCLEOTIDE SEQUENCE [GENOMIC DNA] OF 1099-1142</scope>
    <source>
        <strain>B10.BR</strain>
        <strain>B10.WR</strain>
        <strain>C3H/He</strain>
        <strain>C57BL/6J</strain>
        <strain>CBA/J</strain>
        <strain>DBA/2J</strain>
    </source>
</reference>
<reference key="14">
    <citation type="journal article" date="1985" name="Proc. Natl. Acad. Sci. U.S.A.">
        <title>Multiple duplications of complement C4 gene correlate with H-2-controlled testosterone-independent expression of its sex-limited isoform, C4-Slp.</title>
        <authorList>
            <person name="Levi-Strauss M."/>
            <person name="Tosi M."/>
            <person name="Steinmetz M."/>
            <person name="Klein J."/>
            <person name="Meo T."/>
        </authorList>
    </citation>
    <scope>NUCLEOTIDE SEQUENCE [MRNA] OF 1105-1449</scope>
</reference>
<reference key="15">
    <citation type="journal article" date="1984" name="Philos. Trans. R. Soc. Lond., B, Biol. Sci.">
        <title>Sequence heterogeneity of murine complementary DNA clones related to the C4 and C4-Slp isoforms of the fourth complement component.</title>
        <authorList>
            <person name="Tosi M."/>
            <person name="Levi-Strauss M."/>
            <person name="Duponchel C."/>
            <person name="Meo T."/>
        </authorList>
    </citation>
    <scope>NUCLEOTIDE SEQUENCE [MRNA] OF 1257-1376</scope>
</reference>
<reference key="16">
    <citation type="journal article" date="1983" name="Proc. Natl. Acad. Sci. U.S.A.">
        <title>cDNA clone spanning the alpha-gamma subunit junction in the precursor of the murine fourth complement component (C4).</title>
        <authorList>
            <person name="Ogata R.T."/>
            <person name="Shreffler D.C."/>
            <person name="Sepich D.S."/>
            <person name="Lilly S.P."/>
        </authorList>
    </citation>
    <scope>NUCLEOTIDE SEQUENCE [MRNA] OF 1360-1511</scope>
</reference>
<reference key="17">
    <citation type="journal article" date="2007" name="J. Proteome Res.">
        <title>Enhanced analysis of the mouse plasma proteome using cysteine-containing tryptic glycopeptides.</title>
        <authorList>
            <person name="Bernhard O.K."/>
            <person name="Kapp E.A."/>
            <person name="Simpson R.J."/>
        </authorList>
    </citation>
    <scope>GLYCOSYLATION [LARGE SCALE ANALYSIS] AT ASN-1324</scope>
    <source>
        <strain>C57BL/6J</strain>
        <tissue>Plasma</tissue>
    </source>
</reference>
<reference key="18">
    <citation type="journal article" date="2010" name="Cell">
        <title>A tissue-specific atlas of mouse protein phosphorylation and expression.</title>
        <authorList>
            <person name="Huttlin E.L."/>
            <person name="Jedrychowski M.P."/>
            <person name="Elias J.E."/>
            <person name="Goswami T."/>
            <person name="Rad R."/>
            <person name="Beausoleil S.A."/>
            <person name="Villen J."/>
            <person name="Haas W."/>
            <person name="Sowa M.E."/>
            <person name="Gygi S.P."/>
        </authorList>
    </citation>
    <scope>IDENTIFICATION BY MASS SPECTROMETRY [LARGE SCALE ANALYSIS]</scope>
    <source>
        <tissue>Brown adipose tissue</tissue>
        <tissue>Heart</tissue>
        <tissue>Kidney</tissue>
        <tissue>Liver</tissue>
        <tissue>Lung</tissue>
        <tissue>Pancreas</tissue>
        <tissue>Spleen</tissue>
        <tissue>Testis</tissue>
    </source>
</reference>
<proteinExistence type="evidence at protein level"/>
<organism>
    <name type="scientific">Mus musculus</name>
    <name type="common">Mouse</name>
    <dbReference type="NCBI Taxonomy" id="10090"/>
    <lineage>
        <taxon>Eukaryota</taxon>
        <taxon>Metazoa</taxon>
        <taxon>Chordata</taxon>
        <taxon>Craniata</taxon>
        <taxon>Vertebrata</taxon>
        <taxon>Euteleostomi</taxon>
        <taxon>Mammalia</taxon>
        <taxon>Eutheria</taxon>
        <taxon>Euarchontoglires</taxon>
        <taxon>Glires</taxon>
        <taxon>Rodentia</taxon>
        <taxon>Myomorpha</taxon>
        <taxon>Muroidea</taxon>
        <taxon>Muridae</taxon>
        <taxon>Murinae</taxon>
        <taxon>Mus</taxon>
        <taxon>Mus</taxon>
    </lineage>
</organism>
<comment type="function">
    <text evidence="1">Precursor of non-enzymatic components of the classical, lectin and GZMK complement pathways, which consist in a cascade of proteins that leads to phagocytosis and breakdown of pathogens and signaling that strengthens the adaptive immune system.</text>
</comment>
<comment type="function">
    <molecule>Complement C4b-B</molecule>
    <text evidence="2">Non-enzymatic component of C3 and C5 convertases. Generated following cleavage by complement proteases (C1S, MASP2 or GZMK, depending on the complement pathway), it covalently attaches to the surface of pathogens, where it acts as an opsonin that marks the surface of antigens for removal. It then recruits the serine protease complement C2b to form the C3 and C5 convertases, which cleave and activate C3 and C5, respectively, the next components of the complement pathways. Complement C4b-A isotype is responsible for effective binding to form amide bonds with immune aggregates or protein antigens, while complement C4b-B isotype catalyzes the transacylation of the thioester carbonyl group to form ester bonds with carbohydrate antigens.</text>
</comment>
<comment type="function">
    <molecule>C4a anaphylatoxin</molecule>
    <text evidence="2">Putative humoral mediator released following cleavage by complement proteases (C1S, MASP2 or GZMK, depending on the complement pathway). While it is strongly similar to anaphylatoxins, its role is unclear. Was reported to act as a mediator of local inflammatory process; however these effects were probably due to contamination with C3a and/C5a anaphylatoxins in biological assays.</text>
</comment>
<comment type="subunit">
    <text evidence="2">In absence of complement activation, circulates in blood as a disulfide-linked trimer of an alpha, beta and gamma chain.</text>
</comment>
<comment type="subunit">
    <molecule>Complement C4b-B</molecule>
    <text evidence="2">Complement C4b is composed of complement C4b-A, complement C4 beta and complement C4 gamma chains that are associated via disulfide bonds. Non-enzymatic component of the C3 convertase, also named C4bC2b, composed of the serine protease complement C2b (C2), as well as complement C4b. Non-enzymatic component of the C5 convertase, also named C4bC2bC3b, composed of the serine protease complement C2b (C2), complement C3b, as well as complement C4b.</text>
</comment>
<comment type="subcellular location">
    <subcellularLocation>
        <location evidence="2">Secreted</location>
    </subcellularLocation>
</comment>
<comment type="subcellular location">
    <molecule>C4a anaphylatoxin</molecule>
    <subcellularLocation>
        <location evidence="2">Secreted</location>
    </subcellularLocation>
</comment>
<comment type="subcellular location">
    <molecule>Complement C4b-B</molecule>
    <subcellularLocation>
        <location evidence="2">Secreted</location>
    </subcellularLocation>
    <subcellularLocation>
        <location evidence="2">Cell surface</location>
    </subcellularLocation>
    <text evidence="2">Covalently associated with the surface of pathogens: the internal thioester bond reacts with carbohydrate antigens on the target surface to form amide or ester bonds.</text>
</comment>
<comment type="PTM">
    <text evidence="2">Prior to secretion, the single-chain precursor is enzymatically cleaved by plasminogen (PLG) to yield non-identical chains alpha, beta and gamma. During activation of the complement systems, the alpha chain is cleaved into C4a and C4b by different proteases depending on the complement pathway: C4b stays linked to the beta and gamma chains, while C4a is released in the plasma. The alpha chain is cleaved by C1S to generate C4a and C4b following activation by the classical complement system. The alpha chain is cleaved to generate C4a and C4b by MASP2 following activation by the lectin complement system. The alpha chain is cleaved by GZMK to generate C4a and C4b following activation by the GZMK complement system. Further degradation of C4b by C1 into the inactive fragments C4c and C4d blocks the generation of C3 convertase. The proteolytic cleavages often are incomplete so that many structural forms can be found in plasma.</text>
</comment>
<comment type="PTM">
    <molecule>Complement C4b-B</molecule>
    <text evidence="2">Upon activation, the internal thioester bond reacts with carbohydrate antigens on the target surface to form amide or ester bonds, leading to covalent association with the surface of pathogens.</text>
</comment>
<comment type="PTM">
    <molecule>Complement C4b-B</molecule>
    <text evidence="2">Complement C4b interacts with complement C3b via a thioester linkage.</text>
</comment>
<comment type="miscellaneous">
    <text evidence="8">C4 is a major histocompatibility complex class-III protein.</text>
</comment>